<protein>
    <recommendedName>
        <fullName evidence="21">BRISC complex subunit Abraxas 2</fullName>
    </recommendedName>
    <alternativeName>
        <fullName evidence="18">Abraxas brother protein 1</fullName>
    </alternativeName>
    <alternativeName>
        <fullName>Protein FAM175B</fullName>
    </alternativeName>
</protein>
<keyword id="KW-0002">3D-structure</keyword>
<keyword id="KW-0131">Cell cycle</keyword>
<keyword id="KW-0132">Cell division</keyword>
<keyword id="KW-0175">Coiled coil</keyword>
<keyword id="KW-0963">Cytoplasm</keyword>
<keyword id="KW-0206">Cytoskeleton</keyword>
<keyword id="KW-0493">Microtubule</keyword>
<keyword id="KW-0498">Mitosis</keyword>
<keyword id="KW-0539">Nucleus</keyword>
<keyword id="KW-0597">Phosphoprotein</keyword>
<keyword id="KW-1267">Proteomics identification</keyword>
<keyword id="KW-1185">Reference proteome</keyword>
<keyword id="KW-0833">Ubl conjugation pathway</keyword>
<name>ABRX2_HUMAN</name>
<comment type="function">
    <text evidence="1 6 8 9 13 14">Component of the BRISC complex, a multiprotein complex that specifically cleaves 'Lys-63'-linked polyubiquitin, leaving the last ubiquitin chain attached to its substrates (PubMed:19214193, PubMed:20032457, PubMed:20656690, PubMed:24075985). May act as a central scaffold protein that assembles the various components of the BRISC complex and retains them in the cytoplasm (PubMed:20656690). Plays a role in regulating the onset of apoptosis via its role in modulating 'Lys-63'-linked ubiquitination of target proteins (By similarity). Required for normal mitotic spindle assembly and microtubule attachment to kinetochores via its role in deubiquitinating NUMA1 (PubMed:26195665). Plays a role in interferon signaling via its role in the deubiquitination of the interferon receptor IFNAR1; deubiquitination increases IFNAR1 activities by enhancing its stability and cell surface expression (PubMed:24075985, PubMed:26344097). Down-regulates the response to bacterial lipopolysaccharide (LPS) via its role in IFNAR1 deubiquitination (PubMed:24075985). Required for normal induction of p53/TP53 in response to DNA damage (PubMed:25283148). Independent of the BRISC complex, promotes interaction between USP7 and p53/TP53, and thereby promotes deubiquitination of p53/TP53, preventing its degradation and resulting in increased p53/TP53-mediated transcription regulation and p53/TP53-dependent apoptosis in response to DNA damage (PubMed:25283148).</text>
</comment>
<comment type="subunit">
    <text evidence="5 6 7 8 9 10 11 12 13 14 15 16">Component of the BRISC complex, at least composed of ABRAXAS2, BRCC3/BRCC36, BABAM2 and BABAM1/NBA1 (PubMed:19214193, PubMed:20032457, PubMed:21282113, PubMed:24075985, PubMed:25283148, PubMed:26195665, PubMed:26344097). Interacts with BRCC3/BRCC36; the interaction is direct (PubMed:20032457, PubMed:20656690, PubMed:26344097). Interacts with BABAM1 (PubMed:21282113). Does not interact with BRCA1 (PubMed:17525340, PubMed:21282113). Interacts with SHMT1 and SHMT2; the interaction is direct. Identified in a complex with SHMT2 and the other subunits of the BRISC complex (PubMed:24075985). The BRISC complex binds monoubiquitin and both 'Lys-48'- and 'Lys-63'-linked polyubiquitin (PubMed:20032457). Identified in complexes with IFNAR1, IFNAR2 and SHMT2 (PubMed:24075985). Interacts with THAP5 (PubMed:21195082). Interacts with ATF4 (PubMed:22974638). Identified in a complex with p53/TP53 and USP7; interacts directly with both proteins (PubMed:25283148). Interacts with NUMA1 (PubMed:26195665). Interacts with microtubule minus ends (PubMed:26195665). Binds polyubiquitin (PubMed:19261749).</text>
</comment>
<comment type="interaction">
    <interactant intactId="EBI-1056583">
        <id>Q15018</id>
    </interactant>
    <interactant intactId="EBI-750352">
        <id>P46736</id>
        <label>BRCC3</label>
    </interactant>
    <organismsDiffer>false</organismsDiffer>
    <experiments>8</experiments>
</comment>
<comment type="interaction">
    <interactant intactId="EBI-1056583">
        <id>Q15018</id>
    </interactant>
    <interactant intactId="EBI-740086">
        <id>Q96GG9</id>
        <label>DCUN1D1</label>
    </interactant>
    <organismsDiffer>false</organismsDiffer>
    <experiments>3</experiments>
</comment>
<comment type="subcellular location">
    <subcellularLocation>
        <location evidence="9 10 11 12 13 14">Cytoplasm</location>
    </subcellularLocation>
    <subcellularLocation>
        <location evidence="11 12 13 14">Nucleus</location>
    </subcellularLocation>
    <subcellularLocation>
        <location evidence="15">Cytoplasm</location>
        <location evidence="15">Cytoskeleton</location>
        <location evidence="15">Spindle pole</location>
    </subcellularLocation>
    <subcellularLocation>
        <location evidence="15">Cytoplasm</location>
        <location evidence="15">Cytoskeleton</location>
    </subcellularLocation>
    <text evidence="11 12 14 15">A minor proportion is detected in the nucleus (PubMed:21282113, PubMed:22974638). Translocates into the nucleus in response to DNA damage (PubMed:25283148). Directly binds to microtubules and is detected at the minus end of K-fibers (PubMed:26195665). Co-localizes with NUMA1 at mitotic spindle poles (PubMed:26195665).</text>
</comment>
<comment type="tissue specificity">
    <text evidence="10">Detected in heart muscle (at protein level). Detected in heart and muscle, and at much lower levels in brain (PubMed:21195082).</text>
</comment>
<comment type="induction">
    <text evidence="10 14">Up-regulated in response to DNA damage (PubMed:25283148). Up-regulated in myocardial infarction area (at protein level) (PubMed:21195082).</text>
</comment>
<comment type="similarity">
    <text evidence="20">Belongs to the FAM175 family. Abro1 subfamily.</text>
</comment>
<comment type="caution">
    <text evidence="20">Although strongly related to the ABRAXAS1 protein, lacks the C-terminal pSXXF that constitutes a specific recognition motif for the BRCT domain of BRCA1.</text>
</comment>
<comment type="sequence caution" evidence="20">
    <conflict type="erroneous initiation">
        <sequence resource="EMBL-CDS" id="BAA09927"/>
    </conflict>
    <text>Extended N-terminus.</text>
</comment>
<gene>
    <name evidence="21" type="primary">ABRAXAS2</name>
    <name evidence="17" type="synonym">ABRO1</name>
    <name evidence="21" type="synonym">FAM175B</name>
    <name evidence="19" type="synonym">KIAA0157</name>
</gene>
<dbReference type="EMBL" id="D63877">
    <property type="protein sequence ID" value="BAA09927.1"/>
    <property type="status" value="ALT_INIT"/>
    <property type="molecule type" value="mRNA"/>
</dbReference>
<dbReference type="EMBL" id="AK296677">
    <property type="protein sequence ID" value="BAG59274.1"/>
    <property type="molecule type" value="mRNA"/>
</dbReference>
<dbReference type="EMBL" id="BC008999">
    <property type="protein sequence ID" value="AAH08999.2"/>
    <property type="molecule type" value="mRNA"/>
</dbReference>
<dbReference type="CCDS" id="CCDS31308.2"/>
<dbReference type="RefSeq" id="NP_115558.3">
    <property type="nucleotide sequence ID" value="NM_032182.3"/>
</dbReference>
<dbReference type="PDB" id="6H3C">
    <property type="method" value="EM"/>
    <property type="resolution" value="3.90 A"/>
    <property type="chains" value="A/F=1-415"/>
</dbReference>
<dbReference type="PDB" id="6R8F">
    <property type="method" value="EM"/>
    <property type="resolution" value="3.80 A"/>
    <property type="chains" value="B/D=1-267"/>
</dbReference>
<dbReference type="PDB" id="8PVY">
    <property type="method" value="EM"/>
    <property type="resolution" value="3.02 A"/>
    <property type="chains" value="B/D/H/J=1-267"/>
</dbReference>
<dbReference type="PDB" id="8PY2">
    <property type="method" value="EM"/>
    <property type="resolution" value="3.32 A"/>
    <property type="chains" value="B/D/H/J=1-267"/>
</dbReference>
<dbReference type="PDBsum" id="6H3C"/>
<dbReference type="PDBsum" id="6R8F"/>
<dbReference type="PDBsum" id="8PVY"/>
<dbReference type="PDBsum" id="8PY2"/>
<dbReference type="EMDB" id="EMD-0132"/>
<dbReference type="EMDB" id="EMD-17980"/>
<dbReference type="EMDB" id="EMD-18009"/>
<dbReference type="EMDB" id="EMD-4759"/>
<dbReference type="EMDB" id="EMD-4760"/>
<dbReference type="SMR" id="Q15018"/>
<dbReference type="BioGRID" id="116784">
    <property type="interactions" value="100"/>
</dbReference>
<dbReference type="ComplexPortal" id="CPX-9341">
    <property type="entry name" value="BRISC-SHMT2 complex"/>
</dbReference>
<dbReference type="ComplexPortal" id="CPX-9421">
    <property type="entry name" value="BRISC complex"/>
</dbReference>
<dbReference type="CORUM" id="Q15018"/>
<dbReference type="FunCoup" id="Q15018">
    <property type="interactions" value="2806"/>
</dbReference>
<dbReference type="IntAct" id="Q15018">
    <property type="interactions" value="87"/>
</dbReference>
<dbReference type="MINT" id="Q15018"/>
<dbReference type="STRING" id="9606.ENSP00000298492"/>
<dbReference type="BindingDB" id="Q15018"/>
<dbReference type="GlyGen" id="Q15018">
    <property type="glycosylation" value="3 sites, 1 N-linked glycan (1 site), 1 O-linked glycan (2 sites)"/>
</dbReference>
<dbReference type="iPTMnet" id="Q15018"/>
<dbReference type="PhosphoSitePlus" id="Q15018"/>
<dbReference type="SwissPalm" id="Q15018"/>
<dbReference type="BioMuta" id="ABRAXAS2"/>
<dbReference type="DMDM" id="84029317"/>
<dbReference type="jPOST" id="Q15018"/>
<dbReference type="MassIVE" id="Q15018"/>
<dbReference type="PaxDb" id="9606-ENSP00000298492"/>
<dbReference type="PeptideAtlas" id="Q15018"/>
<dbReference type="ProteomicsDB" id="60367"/>
<dbReference type="Pumba" id="Q15018"/>
<dbReference type="Antibodypedia" id="32387">
    <property type="antibodies" value="84 antibodies from 16 providers"/>
</dbReference>
<dbReference type="DNASU" id="23172"/>
<dbReference type="Ensembl" id="ENST00000298492.6">
    <property type="protein sequence ID" value="ENSP00000298492.5"/>
    <property type="gene ID" value="ENSG00000165660.8"/>
</dbReference>
<dbReference type="GeneID" id="23172"/>
<dbReference type="KEGG" id="hsa:23172"/>
<dbReference type="MANE-Select" id="ENST00000298492.6">
    <property type="protein sequence ID" value="ENSP00000298492.5"/>
    <property type="RefSeq nucleotide sequence ID" value="NM_032182.4"/>
    <property type="RefSeq protein sequence ID" value="NP_115558.3"/>
</dbReference>
<dbReference type="UCSC" id="uc001lib.4">
    <property type="organism name" value="human"/>
</dbReference>
<dbReference type="AGR" id="HGNC:28975"/>
<dbReference type="CTD" id="23172"/>
<dbReference type="DisGeNET" id="23172"/>
<dbReference type="GeneCards" id="ABRAXAS2"/>
<dbReference type="HGNC" id="HGNC:28975">
    <property type="gene designation" value="ABRAXAS2"/>
</dbReference>
<dbReference type="HPA" id="ENSG00000165660">
    <property type="expression patterns" value="Low tissue specificity"/>
</dbReference>
<dbReference type="MIM" id="611144">
    <property type="type" value="gene"/>
</dbReference>
<dbReference type="neXtProt" id="NX_Q15018"/>
<dbReference type="OpenTargets" id="ENSG00000165660"/>
<dbReference type="PharmGKB" id="PA162387331"/>
<dbReference type="VEuPathDB" id="HostDB:ENSG00000165660"/>
<dbReference type="eggNOG" id="ENOG502QTRN">
    <property type="taxonomic scope" value="Eukaryota"/>
</dbReference>
<dbReference type="GeneTree" id="ENSGT00530000063424"/>
<dbReference type="HOGENOM" id="CLU_040659_0_0_1"/>
<dbReference type="InParanoid" id="Q15018"/>
<dbReference type="OMA" id="CPPRGMM"/>
<dbReference type="OrthoDB" id="6358435at2759"/>
<dbReference type="PAN-GO" id="Q15018">
    <property type="GO annotations" value="6 GO annotations based on evolutionary models"/>
</dbReference>
<dbReference type="PhylomeDB" id="Q15018"/>
<dbReference type="TreeFam" id="TF331751"/>
<dbReference type="PathwayCommons" id="Q15018"/>
<dbReference type="Reactome" id="R-HSA-5689901">
    <property type="pathway name" value="Metalloprotease DUBs"/>
</dbReference>
<dbReference type="SignaLink" id="Q15018"/>
<dbReference type="BioGRID-ORCS" id="23172">
    <property type="hits" value="24 hits in 1165 CRISPR screens"/>
</dbReference>
<dbReference type="ChiTaRS" id="ABRAXAS2">
    <property type="organism name" value="human"/>
</dbReference>
<dbReference type="GeneWiki" id="KIAA0157"/>
<dbReference type="GenomeRNAi" id="23172"/>
<dbReference type="Pharos" id="Q15018">
    <property type="development level" value="Tbio"/>
</dbReference>
<dbReference type="PRO" id="PR:Q15018"/>
<dbReference type="Proteomes" id="UP000005640">
    <property type="component" value="Chromosome 10"/>
</dbReference>
<dbReference type="RNAct" id="Q15018">
    <property type="molecule type" value="protein"/>
</dbReference>
<dbReference type="Bgee" id="ENSG00000165660">
    <property type="expression patterns" value="Expressed in secondary oocyte and 198 other cell types or tissues"/>
</dbReference>
<dbReference type="GO" id="GO:0070552">
    <property type="term" value="C:BRISC complex"/>
    <property type="evidence" value="ECO:0000314"/>
    <property type="project" value="UniProtKB"/>
</dbReference>
<dbReference type="GO" id="GO:0036064">
    <property type="term" value="C:ciliary basal body"/>
    <property type="evidence" value="ECO:0000314"/>
    <property type="project" value="HPA"/>
</dbReference>
<dbReference type="GO" id="GO:0005737">
    <property type="term" value="C:cytoplasm"/>
    <property type="evidence" value="ECO:0000314"/>
    <property type="project" value="UniProtKB"/>
</dbReference>
<dbReference type="GO" id="GO:0005829">
    <property type="term" value="C:cytosol"/>
    <property type="evidence" value="ECO:0000314"/>
    <property type="project" value="HPA"/>
</dbReference>
<dbReference type="GO" id="GO:0005874">
    <property type="term" value="C:microtubule"/>
    <property type="evidence" value="ECO:0007669"/>
    <property type="project" value="UniProtKB-KW"/>
</dbReference>
<dbReference type="GO" id="GO:0005634">
    <property type="term" value="C:nucleus"/>
    <property type="evidence" value="ECO:0000318"/>
    <property type="project" value="GO_Central"/>
</dbReference>
<dbReference type="GO" id="GO:0000922">
    <property type="term" value="C:spindle pole"/>
    <property type="evidence" value="ECO:0007669"/>
    <property type="project" value="UniProtKB-SubCell"/>
</dbReference>
<dbReference type="GO" id="GO:0008017">
    <property type="term" value="F:microtubule binding"/>
    <property type="evidence" value="ECO:0000314"/>
    <property type="project" value="UniProtKB"/>
</dbReference>
<dbReference type="GO" id="GO:0031593">
    <property type="term" value="F:polyubiquitin modification-dependent protein binding"/>
    <property type="evidence" value="ECO:0000314"/>
    <property type="project" value="UniProtKB"/>
</dbReference>
<dbReference type="GO" id="GO:0008608">
    <property type="term" value="P:attachment of spindle microtubules to kinetochore"/>
    <property type="evidence" value="ECO:0000315"/>
    <property type="project" value="UniProtKB"/>
</dbReference>
<dbReference type="GO" id="GO:0051301">
    <property type="term" value="P:cell division"/>
    <property type="evidence" value="ECO:0007669"/>
    <property type="project" value="UniProtKB-KW"/>
</dbReference>
<dbReference type="GO" id="GO:0007059">
    <property type="term" value="P:chromosome segregation"/>
    <property type="evidence" value="ECO:0000315"/>
    <property type="project" value="UniProtKB"/>
</dbReference>
<dbReference type="GO" id="GO:0000278">
    <property type="term" value="P:mitotic cell cycle"/>
    <property type="evidence" value="ECO:0000315"/>
    <property type="project" value="UniProtKB"/>
</dbReference>
<dbReference type="GO" id="GO:0090307">
    <property type="term" value="P:mitotic spindle assembly"/>
    <property type="evidence" value="ECO:0000315"/>
    <property type="project" value="UniProtKB"/>
</dbReference>
<dbReference type="GO" id="GO:0070536">
    <property type="term" value="P:protein K63-linked deubiquitination"/>
    <property type="evidence" value="ECO:0000315"/>
    <property type="project" value="UniProtKB"/>
</dbReference>
<dbReference type="GO" id="GO:0002931">
    <property type="term" value="P:response to ischemia"/>
    <property type="evidence" value="ECO:0000315"/>
    <property type="project" value="UniProtKB"/>
</dbReference>
<dbReference type="CDD" id="cd23524">
    <property type="entry name" value="Abraxas_2"/>
    <property type="match status" value="1"/>
</dbReference>
<dbReference type="InterPro" id="IPR023240">
    <property type="entry name" value="BRISC_Abraxas2"/>
</dbReference>
<dbReference type="InterPro" id="IPR023238">
    <property type="entry name" value="FAM175"/>
</dbReference>
<dbReference type="InterPro" id="IPR037518">
    <property type="entry name" value="MPN"/>
</dbReference>
<dbReference type="PANTHER" id="PTHR31728">
    <property type="entry name" value="ABRAXAS FAMILY MEMBER"/>
    <property type="match status" value="1"/>
</dbReference>
<dbReference type="PANTHER" id="PTHR31728:SF1">
    <property type="entry name" value="BRISC COMPLEX SUBUNIT ABRAXAS 2"/>
    <property type="match status" value="1"/>
</dbReference>
<dbReference type="Pfam" id="PF21125">
    <property type="entry name" value="MPN_2A_DUB_like"/>
    <property type="match status" value="1"/>
</dbReference>
<dbReference type="PRINTS" id="PR02053">
    <property type="entry name" value="BRISCABRO1"/>
</dbReference>
<dbReference type="PRINTS" id="PR02051">
    <property type="entry name" value="PROTEINF175"/>
</dbReference>
<dbReference type="PROSITE" id="PS50249">
    <property type="entry name" value="MPN"/>
    <property type="match status" value="1"/>
</dbReference>
<accession>Q15018</accession>
<accession>B4DKR2</accession>
<accession>Q96H11</accession>
<evidence type="ECO:0000250" key="1">
    <source>
        <dbReference type="UniProtKB" id="Q3TCJ1"/>
    </source>
</evidence>
<evidence type="ECO:0000255" key="2"/>
<evidence type="ECO:0000255" key="3">
    <source>
        <dbReference type="PROSITE-ProRule" id="PRU01182"/>
    </source>
</evidence>
<evidence type="ECO:0000256" key="4">
    <source>
        <dbReference type="SAM" id="MobiDB-lite"/>
    </source>
</evidence>
<evidence type="ECO:0000269" key="5">
    <source>
    </source>
</evidence>
<evidence type="ECO:0000269" key="6">
    <source>
    </source>
</evidence>
<evidence type="ECO:0000269" key="7">
    <source>
    </source>
</evidence>
<evidence type="ECO:0000269" key="8">
    <source>
    </source>
</evidence>
<evidence type="ECO:0000269" key="9">
    <source>
    </source>
</evidence>
<evidence type="ECO:0000269" key="10">
    <source>
    </source>
</evidence>
<evidence type="ECO:0000269" key="11">
    <source>
    </source>
</evidence>
<evidence type="ECO:0000269" key="12">
    <source>
    </source>
</evidence>
<evidence type="ECO:0000269" key="13">
    <source>
    </source>
</evidence>
<evidence type="ECO:0000269" key="14">
    <source>
    </source>
</evidence>
<evidence type="ECO:0000269" key="15">
    <source>
    </source>
</evidence>
<evidence type="ECO:0000269" key="16">
    <source>
    </source>
</evidence>
<evidence type="ECO:0000303" key="17">
    <source>
    </source>
</evidence>
<evidence type="ECO:0000303" key="18">
    <source>
    </source>
</evidence>
<evidence type="ECO:0000303" key="19">
    <source>
    </source>
</evidence>
<evidence type="ECO:0000305" key="20"/>
<evidence type="ECO:0000312" key="21">
    <source>
        <dbReference type="HGNC" id="HGNC:28975"/>
    </source>
</evidence>
<evidence type="ECO:0007744" key="22">
    <source>
    </source>
</evidence>
<evidence type="ECO:0007744" key="23">
    <source>
    </source>
</evidence>
<evidence type="ECO:0007744" key="24">
    <source>
    </source>
</evidence>
<evidence type="ECO:0007744" key="25">
    <source>
    </source>
</evidence>
<evidence type="ECO:0007744" key="26">
    <source>
    </source>
</evidence>
<evidence type="ECO:0007744" key="27">
    <source>
    </source>
</evidence>
<organism>
    <name type="scientific">Homo sapiens</name>
    <name type="common">Human</name>
    <dbReference type="NCBI Taxonomy" id="9606"/>
    <lineage>
        <taxon>Eukaryota</taxon>
        <taxon>Metazoa</taxon>
        <taxon>Chordata</taxon>
        <taxon>Craniata</taxon>
        <taxon>Vertebrata</taxon>
        <taxon>Euteleostomi</taxon>
        <taxon>Mammalia</taxon>
        <taxon>Eutheria</taxon>
        <taxon>Euarchontoglires</taxon>
        <taxon>Primates</taxon>
        <taxon>Haplorrhini</taxon>
        <taxon>Catarrhini</taxon>
        <taxon>Hominidae</taxon>
        <taxon>Homo</taxon>
    </lineage>
</organism>
<reference key="1">
    <citation type="journal article" date="1995" name="DNA Res.">
        <title>Prediction of the coding sequences of unidentified human genes. IV. The coding sequences of 40 new genes (KIAA0121-KIAA0160) deduced by analysis of cDNA clones from human cell line KG-1.</title>
        <authorList>
            <person name="Nagase T."/>
            <person name="Seki N."/>
            <person name="Tanaka A."/>
            <person name="Ishikawa K."/>
            <person name="Nomura N."/>
        </authorList>
    </citation>
    <scope>NUCLEOTIDE SEQUENCE [LARGE SCALE MRNA]</scope>
    <source>
        <tissue>Bone marrow</tissue>
    </source>
</reference>
<reference key="2">
    <citation type="journal article" date="2004" name="Nat. Genet.">
        <title>Complete sequencing and characterization of 21,243 full-length human cDNAs.</title>
        <authorList>
            <person name="Ota T."/>
            <person name="Suzuki Y."/>
            <person name="Nishikawa T."/>
            <person name="Otsuki T."/>
            <person name="Sugiyama T."/>
            <person name="Irie R."/>
            <person name="Wakamatsu A."/>
            <person name="Hayashi K."/>
            <person name="Sato H."/>
            <person name="Nagai K."/>
            <person name="Kimura K."/>
            <person name="Makita H."/>
            <person name="Sekine M."/>
            <person name="Obayashi M."/>
            <person name="Nishi T."/>
            <person name="Shibahara T."/>
            <person name="Tanaka T."/>
            <person name="Ishii S."/>
            <person name="Yamamoto J."/>
            <person name="Saito K."/>
            <person name="Kawai Y."/>
            <person name="Isono Y."/>
            <person name="Nakamura Y."/>
            <person name="Nagahari K."/>
            <person name="Murakami K."/>
            <person name="Yasuda T."/>
            <person name="Iwayanagi T."/>
            <person name="Wagatsuma M."/>
            <person name="Shiratori A."/>
            <person name="Sudo H."/>
            <person name="Hosoiri T."/>
            <person name="Kaku Y."/>
            <person name="Kodaira H."/>
            <person name="Kondo H."/>
            <person name="Sugawara M."/>
            <person name="Takahashi M."/>
            <person name="Kanda K."/>
            <person name="Yokoi T."/>
            <person name="Furuya T."/>
            <person name="Kikkawa E."/>
            <person name="Omura Y."/>
            <person name="Abe K."/>
            <person name="Kamihara K."/>
            <person name="Katsuta N."/>
            <person name="Sato K."/>
            <person name="Tanikawa M."/>
            <person name="Yamazaki M."/>
            <person name="Ninomiya K."/>
            <person name="Ishibashi T."/>
            <person name="Yamashita H."/>
            <person name="Murakawa K."/>
            <person name="Fujimori K."/>
            <person name="Tanai H."/>
            <person name="Kimata M."/>
            <person name="Watanabe M."/>
            <person name="Hiraoka S."/>
            <person name="Chiba Y."/>
            <person name="Ishida S."/>
            <person name="Ono Y."/>
            <person name="Takiguchi S."/>
            <person name="Watanabe S."/>
            <person name="Yosida M."/>
            <person name="Hotuta T."/>
            <person name="Kusano J."/>
            <person name="Kanehori K."/>
            <person name="Takahashi-Fujii A."/>
            <person name="Hara H."/>
            <person name="Tanase T.-O."/>
            <person name="Nomura Y."/>
            <person name="Togiya S."/>
            <person name="Komai F."/>
            <person name="Hara R."/>
            <person name="Takeuchi K."/>
            <person name="Arita M."/>
            <person name="Imose N."/>
            <person name="Musashino K."/>
            <person name="Yuuki H."/>
            <person name="Oshima A."/>
            <person name="Sasaki N."/>
            <person name="Aotsuka S."/>
            <person name="Yoshikawa Y."/>
            <person name="Matsunawa H."/>
            <person name="Ichihara T."/>
            <person name="Shiohata N."/>
            <person name="Sano S."/>
            <person name="Moriya S."/>
            <person name="Momiyama H."/>
            <person name="Satoh N."/>
            <person name="Takami S."/>
            <person name="Terashima Y."/>
            <person name="Suzuki O."/>
            <person name="Nakagawa S."/>
            <person name="Senoh A."/>
            <person name="Mizoguchi H."/>
            <person name="Goto Y."/>
            <person name="Shimizu F."/>
            <person name="Wakebe H."/>
            <person name="Hishigaki H."/>
            <person name="Watanabe T."/>
            <person name="Sugiyama A."/>
            <person name="Takemoto M."/>
            <person name="Kawakami B."/>
            <person name="Yamazaki M."/>
            <person name="Watanabe K."/>
            <person name="Kumagai A."/>
            <person name="Itakura S."/>
            <person name="Fukuzumi Y."/>
            <person name="Fujimori Y."/>
            <person name="Komiyama M."/>
            <person name="Tashiro H."/>
            <person name="Tanigami A."/>
            <person name="Fujiwara T."/>
            <person name="Ono T."/>
            <person name="Yamada K."/>
            <person name="Fujii Y."/>
            <person name="Ozaki K."/>
            <person name="Hirao M."/>
            <person name="Ohmori Y."/>
            <person name="Kawabata A."/>
            <person name="Hikiji T."/>
            <person name="Kobatake N."/>
            <person name="Inagaki H."/>
            <person name="Ikema Y."/>
            <person name="Okamoto S."/>
            <person name="Okitani R."/>
            <person name="Kawakami T."/>
            <person name="Noguchi S."/>
            <person name="Itoh T."/>
            <person name="Shigeta K."/>
            <person name="Senba T."/>
            <person name="Matsumura K."/>
            <person name="Nakajima Y."/>
            <person name="Mizuno T."/>
            <person name="Morinaga M."/>
            <person name="Sasaki M."/>
            <person name="Togashi T."/>
            <person name="Oyama M."/>
            <person name="Hata H."/>
            <person name="Watanabe M."/>
            <person name="Komatsu T."/>
            <person name="Mizushima-Sugano J."/>
            <person name="Satoh T."/>
            <person name="Shirai Y."/>
            <person name="Takahashi Y."/>
            <person name="Nakagawa K."/>
            <person name="Okumura K."/>
            <person name="Nagase T."/>
            <person name="Nomura N."/>
            <person name="Kikuchi H."/>
            <person name="Masuho Y."/>
            <person name="Yamashita R."/>
            <person name="Nakai K."/>
            <person name="Yada T."/>
            <person name="Nakamura Y."/>
            <person name="Ohara O."/>
            <person name="Isogai T."/>
            <person name="Sugano S."/>
        </authorList>
    </citation>
    <scope>NUCLEOTIDE SEQUENCE [LARGE SCALE MRNA]</scope>
    <source>
        <tissue>Tongue</tissue>
    </source>
</reference>
<reference key="3">
    <citation type="journal article" date="2004" name="Genome Res.">
        <title>The status, quality, and expansion of the NIH full-length cDNA project: the Mammalian Gene Collection (MGC).</title>
        <authorList>
            <consortium name="The MGC Project Team"/>
        </authorList>
    </citation>
    <scope>NUCLEOTIDE SEQUENCE [LARGE SCALE MRNA]</scope>
    <source>
        <tissue>Placenta</tissue>
    </source>
</reference>
<reference key="4">
    <citation type="journal article" date="2004" name="Anal. Chem.">
        <title>Robust phosphoproteomic profiling of tyrosine phosphorylation sites from human T cells using immobilized metal affinity chromatography and tandem mass spectrometry.</title>
        <authorList>
            <person name="Brill L.M."/>
            <person name="Salomon A.R."/>
            <person name="Ficarro S.B."/>
            <person name="Mukherji M."/>
            <person name="Stettler-Gill M."/>
            <person name="Peters E.C."/>
        </authorList>
    </citation>
    <scope>IDENTIFICATION BY MASS SPECTROMETRY [LARGE SCALE ANALYSIS]</scope>
    <source>
        <tissue>Leukemic T-cell</tissue>
    </source>
</reference>
<reference key="5">
    <citation type="journal article" date="2006" name="Cell">
        <title>Global, in vivo, and site-specific phosphorylation dynamics in signaling networks.</title>
        <authorList>
            <person name="Olsen J.V."/>
            <person name="Blagoev B."/>
            <person name="Gnad F."/>
            <person name="Macek B."/>
            <person name="Kumar C."/>
            <person name="Mortensen P."/>
            <person name="Mann M."/>
        </authorList>
    </citation>
    <scope>PHOSPHORYLATION [LARGE SCALE ANALYSIS] AT SER-368 AND SER-372</scope>
    <scope>IDENTIFICATION BY MASS SPECTROMETRY [LARGE SCALE ANALYSIS]</scope>
    <source>
        <tissue>Cervix carcinoma</tissue>
    </source>
</reference>
<reference key="6">
    <citation type="journal article" date="2007" name="Science">
        <title>Abraxas and RAP80 form a BRCA1 protein complex required for the DNA damage response.</title>
        <authorList>
            <person name="Wang B."/>
            <person name="Matsuoka S."/>
            <person name="Ballif B.A."/>
            <person name="Zhang D."/>
            <person name="Smogorzewska A."/>
            <person name="Giyi S."/>
            <person name="Elledge S.J."/>
        </authorList>
    </citation>
    <scope>LACK OF INTERACTION WITH BRCA1</scope>
    <scope>SUBUNIT</scope>
</reference>
<reference key="7">
    <citation type="journal article" date="2008" name="Proc. Natl. Acad. Sci. U.S.A.">
        <title>A quantitative atlas of mitotic phosphorylation.</title>
        <authorList>
            <person name="Dephoure N."/>
            <person name="Zhou C."/>
            <person name="Villen J."/>
            <person name="Beausoleil S.A."/>
            <person name="Bakalarski C.E."/>
            <person name="Elledge S.J."/>
            <person name="Gygi S.P."/>
        </authorList>
    </citation>
    <scope>PHOSPHORYLATION [LARGE SCALE ANALYSIS] AT SER-280; SER-368; SER-372 AND SER-375</scope>
    <scope>IDENTIFICATION BY MASS SPECTROMETRY [LARGE SCALE ANALYSIS]</scope>
    <source>
        <tissue>Cervix carcinoma</tissue>
    </source>
</reference>
<reference key="8">
    <citation type="journal article" date="2009" name="EMBO J.">
        <title>K63-specific deubiquitination by two JAMM/MPN+ complexes: BRISC-associated Brcc36 and proteasomal Poh1.</title>
        <authorList>
            <person name="Cooper E.M."/>
            <person name="Cutcliffe C."/>
            <person name="Kristiansen T.Z."/>
            <person name="Pandey A."/>
            <person name="Pickart C.M."/>
            <person name="Cohen R.E."/>
        </authorList>
    </citation>
    <scope>IDENTIFICATION IN THE BRISC COMPLEX</scope>
    <scope>FUNCTION</scope>
    <scope>SUBUNIT</scope>
</reference>
<reference key="9">
    <citation type="journal article" date="2009" name="Genes Dev.">
        <title>NBA1, a new player in the Brca1 A complex, is required for DNA damage resistance and checkpoint control.</title>
        <authorList>
            <person name="Wang B."/>
            <person name="Hurov K."/>
            <person name="Hofmann K."/>
            <person name="Elledge S.J."/>
        </authorList>
    </citation>
    <scope>DOMAIN MPN-LIKE</scope>
    <scope>UBIQUITIN-BINDING</scope>
    <scope>SUBUNIT</scope>
</reference>
<reference key="10">
    <citation type="journal article" date="2009" name="Sci. Signal.">
        <title>Quantitative phosphoproteomic analysis of T cell receptor signaling reveals system-wide modulation of protein-protein interactions.</title>
        <authorList>
            <person name="Mayya V."/>
            <person name="Lundgren D.H."/>
            <person name="Hwang S.-I."/>
            <person name="Rezaul K."/>
            <person name="Wu L."/>
            <person name="Eng J.K."/>
            <person name="Rodionov V."/>
            <person name="Han D.K."/>
        </authorList>
    </citation>
    <scope>PHOSPHORYLATION [LARGE SCALE ANALYSIS] AT SER-368; SER-372 AND SER-375</scope>
    <scope>IDENTIFICATION BY MASS SPECTROMETRY [LARGE SCALE ANALYSIS]</scope>
    <source>
        <tissue>Leukemic T-cell</tissue>
    </source>
</reference>
<reference key="11">
    <citation type="journal article" date="2010" name="J. Biol. Chem.">
        <title>Specificity of the BRISC deubiquitinating enzyme is not due to selective binding to Lys63-linked polyubiquitin.</title>
        <authorList>
            <person name="Cooper E.M."/>
            <person name="Boeke J.D."/>
            <person name="Cohen R.E."/>
        </authorList>
    </citation>
    <scope>FUNCTION</scope>
    <scope>SUBUNIT</scope>
    <scope>IDENTIFICATION IN THE BRISC COMPLEX</scope>
    <scope>INTERACTION OF THE BRISC COMPLEX WITH UBIQUITIN</scope>
</reference>
<reference key="12">
    <citation type="journal article" date="2010" name="J. Biol. Chem.">
        <title>The Lys63-specific deubiquitinating enzyme BRCC36 is regulated by two scaffold proteins localizing in different subcellular compartments.</title>
        <authorList>
            <person name="Feng L."/>
            <person name="Wang J."/>
            <person name="Chen J."/>
        </authorList>
    </citation>
    <scope>FUNCTION</scope>
    <scope>INTERACTION WITH BRCC3</scope>
    <scope>IDENTIFICATION BY MASS SPECTROMETRY</scope>
    <scope>SUBCELLULAR LOCATION</scope>
</reference>
<reference key="13">
    <citation type="journal article" date="2010" name="Sci. Signal.">
        <title>Quantitative phosphoproteomics reveals widespread full phosphorylation site occupancy during mitosis.</title>
        <authorList>
            <person name="Olsen J.V."/>
            <person name="Vermeulen M."/>
            <person name="Santamaria A."/>
            <person name="Kumar C."/>
            <person name="Miller M.L."/>
            <person name="Jensen L.J."/>
            <person name="Gnad F."/>
            <person name="Cox J."/>
            <person name="Jensen T.S."/>
            <person name="Nigg E.A."/>
            <person name="Brunak S."/>
            <person name="Mann M."/>
        </authorList>
    </citation>
    <scope>PHOSPHORYLATION [LARGE SCALE ANALYSIS] AT SER-280</scope>
    <scope>IDENTIFICATION BY MASS SPECTROMETRY [LARGE SCALE ANALYSIS]</scope>
    <source>
        <tissue>Cervix carcinoma</tissue>
    </source>
</reference>
<reference key="14">
    <citation type="journal article" date="2011" name="BMC Syst. Biol.">
        <title>Initial characterization of the human central proteome.</title>
        <authorList>
            <person name="Burkard T.R."/>
            <person name="Planyavsky M."/>
            <person name="Kaupe I."/>
            <person name="Breitwieser F.P."/>
            <person name="Buerckstuemmer T."/>
            <person name="Bennett K.L."/>
            <person name="Superti-Furga G."/>
            <person name="Colinge J."/>
        </authorList>
    </citation>
    <scope>IDENTIFICATION BY MASS SPECTROMETRY [LARGE SCALE ANALYSIS]</scope>
</reference>
<reference key="15">
    <citation type="journal article" date="2011" name="J. Biol. Chem.">
        <title>NBA1/MERIT40 and BRE interaction is required for the integrity of two distinct deubiquitinating enzyme BRCC36-containing complexes.</title>
        <authorList>
            <person name="Hu X."/>
            <person name="Kim J.A."/>
            <person name="Castillo A."/>
            <person name="Huang M."/>
            <person name="Liu J."/>
            <person name="Wang B."/>
        </authorList>
    </citation>
    <scope>IDENTIFICATION BY MASS SPECTROMETRY</scope>
    <scope>INTERACTION WITH BABAM1</scope>
    <scope>IDENTIFICATION IN THE BRISC COMPLEX</scope>
    <scope>LACK OF INTERACTION WITH BRCA1</scope>
    <scope>SUBCELLULAR LOCATION</scope>
</reference>
<reference key="16">
    <citation type="journal article" date="2011" name="J. Mol. Cell. Cardiol.">
        <title>Regulation of Abro1/KIAA0157 during myocardial infarction and cell death reveals a novel cardioprotective mechanism for Lys63-specific deubiquitination.</title>
        <authorList>
            <person name="Cilenti L."/>
            <person name="Balakrishnan M.P."/>
            <person name="Wang X.L."/>
            <person name="Ambivero C."/>
            <person name="Sterlicchi M."/>
            <person name="del Monte F."/>
            <person name="Ma X.L."/>
            <person name="Zervos A.S."/>
        </authorList>
    </citation>
    <scope>INTERACTION WITH THAP5</scope>
    <scope>TISSUE SPECIFICITY</scope>
    <scope>INDUCTION</scope>
    <scope>SUBCELLULAR LOCATION</scope>
</reference>
<reference key="17">
    <citation type="journal article" date="2011" name="Sci. Signal.">
        <title>System-wide temporal characterization of the proteome and phosphoproteome of human embryonic stem cell differentiation.</title>
        <authorList>
            <person name="Rigbolt K.T."/>
            <person name="Prokhorova T.A."/>
            <person name="Akimov V."/>
            <person name="Henningsen J."/>
            <person name="Johansen P.T."/>
            <person name="Kratchmarova I."/>
            <person name="Kassem M."/>
            <person name="Mann M."/>
            <person name="Olsen J.V."/>
            <person name="Blagoev B."/>
        </authorList>
    </citation>
    <scope>PHOSPHORYLATION [LARGE SCALE ANALYSIS] AT SER-368</scope>
    <scope>IDENTIFICATION BY MASS SPECTROMETRY [LARGE SCALE ANALYSIS]</scope>
</reference>
<reference key="18">
    <citation type="journal article" date="2012" name="Biochim. Biophys. Acta">
        <title>ATF4 interacts with Abro1/KIAA0157 scaffold protein and participates in a cytoprotective pathway.</title>
        <authorList>
            <person name="Ambivero C.T."/>
            <person name="Cilenti L."/>
            <person name="Zervos A.S."/>
        </authorList>
    </citation>
    <scope>INTERACTION WITH ATF4</scope>
    <scope>SUBCELLULAR LOCATION</scope>
</reference>
<reference key="19">
    <citation type="journal article" date="2013" name="Cell Rep.">
        <title>A BRISC-SHMT complex deubiquitinates IFNAR1 and regulates interferon responses.</title>
        <authorList>
            <person name="Zheng H."/>
            <person name="Gupta V."/>
            <person name="Patterson-Fortin J."/>
            <person name="Bhattacharya S."/>
            <person name="Katlinski K."/>
            <person name="Wu J."/>
            <person name="Varghese B."/>
            <person name="Carbone C.J."/>
            <person name="Aressy B."/>
            <person name="Fuchs S.Y."/>
            <person name="Greenberg R.A."/>
        </authorList>
    </citation>
    <scope>FUNCTION</scope>
    <scope>IDENTIFICATION IN THE BRISC COMPLEX</scope>
    <scope>INTERACTION WITH SHMT1 AND SHMT2</scope>
    <scope>IDENTIFICATION IN A COMPLEX WITH SHMT2 AND IFNAR1</scope>
    <scope>IDENTIFICATION BY MASS SPECTROMETRY</scope>
    <scope>SUBCELLULAR LOCATION</scope>
    <scope>MUTAGENESIS OF 215-ALA--ALA-222</scope>
</reference>
<reference key="20">
    <citation type="journal article" date="2013" name="J. Proteome Res.">
        <title>Toward a comprehensive characterization of a human cancer cell phosphoproteome.</title>
        <authorList>
            <person name="Zhou H."/>
            <person name="Di Palma S."/>
            <person name="Preisinger C."/>
            <person name="Peng M."/>
            <person name="Polat A.N."/>
            <person name="Heck A.J."/>
            <person name="Mohammed S."/>
        </authorList>
    </citation>
    <scope>PHOSPHORYLATION [LARGE SCALE ANALYSIS] AT SER-274 AND SER-280</scope>
    <scope>IDENTIFICATION BY MASS SPECTROMETRY [LARGE SCALE ANALYSIS]</scope>
    <source>
        <tissue>Cervix carcinoma</tissue>
        <tissue>Erythroleukemia</tissue>
    </source>
</reference>
<reference key="21">
    <citation type="journal article" date="2014" name="Nat. Commun.">
        <title>ABRO1 suppresses tumourigenesis and regulates the DNA damage response by stabilizing p53.</title>
        <authorList>
            <person name="Zhang J."/>
            <person name="Cao M."/>
            <person name="Dong J."/>
            <person name="Li C."/>
            <person name="Xu W."/>
            <person name="Zhan Y."/>
            <person name="Wang X."/>
            <person name="Yu M."/>
            <person name="Ge C."/>
            <person name="Ge Z."/>
            <person name="Yang X."/>
        </authorList>
    </citation>
    <scope>FUNCTION</scope>
    <scope>SUBCELLULAR LOCATION</scope>
    <scope>INDUCTION BY DNA DAMAGE</scope>
    <scope>INTERACTION WITH USP7 AND TP53</scope>
    <scope>IDENTIFICATION IN THE BRISC COMPLEX</scope>
</reference>
<reference key="22">
    <citation type="journal article" date="2015" name="J. Cell Biol.">
        <title>The deubiquitinating enzyme complex BRISC is required for proper mitotic spindle assembly in mammalian cells.</title>
        <authorList>
            <person name="Yan K."/>
            <person name="Li L."/>
            <person name="Wang X."/>
            <person name="Hong R."/>
            <person name="Zhang Y."/>
            <person name="Yang H."/>
            <person name="Lin M."/>
            <person name="Zhang S."/>
            <person name="He Q."/>
            <person name="Zheng D."/>
            <person name="Tang J."/>
            <person name="Yin Y."/>
            <person name="Shao G."/>
        </authorList>
    </citation>
    <scope>FUNCTION</scope>
    <scope>INTERACTION WITH NUMA1</scope>
    <scope>SUBUNIT</scope>
    <scope>SUBCELLULAR LOCATION</scope>
</reference>
<reference key="23">
    <citation type="journal article" date="2015" name="Mol. Cell">
        <title>Higher-order assembly of BRCC36-KIAA0157 is required for DUB activity and biological function.</title>
        <authorList>
            <person name="Zeqiraj E."/>
            <person name="Tian L."/>
            <person name="Piggott C.A."/>
            <person name="Pillon M.C."/>
            <person name="Duffy N.M."/>
            <person name="Ceccarelli D.F."/>
            <person name="Keszei A.F."/>
            <person name="Lorenzen K."/>
            <person name="Kurinov I."/>
            <person name="Orlicky S."/>
            <person name="Gish G.D."/>
            <person name="Heck A.J."/>
            <person name="Guarne A."/>
            <person name="Greenberg R.A."/>
            <person name="Sicheri F."/>
        </authorList>
    </citation>
    <scope>FUNCTION</scope>
    <scope>IDENTIFICATION IN THE BRISC COMPLEX</scope>
    <scope>INTERACTION WITH BRCC3; BABAM2; BABAM1 AND SHMT2</scope>
    <scope>SUBUNIT</scope>
    <scope>MUTAGENESIS OF 11-SER-ALA-12; VAL-220; GLU-231 AND VAL-241</scope>
</reference>
<sequence>MAASISGYTFSAVCFHSANSNADHEGFLLGEVRQEETFSISDSQISNTEFLQVIEIHNHQPCSKLFSFYDYASKVNEESLDRILKDRRKKVIGWYRFRRNTQQQMSYREQVLHKQLTRILGVPDLVFLLFSFISTANNSTHALEYVLFRPNRRYNQRISLAIPNLGNTSQQEYKVSSVPNTSQSYAKVIKEHGTDFFDKDGVMKDIRAIYQVYNALQEKVQAVCADVEKSERVVESCQAEVNKLRRQITQRKNEKEQERRLQQAVLSRQMPSESLDPAFSPRMPSSGFAAEGRSTLGDAEASDPPPPYSDFHPNNQESTLSHSRMERSVFMPRPQAVGSSNYASTSAGLKYPGSGADLPPPQRAAGDSGEDSDDSDYENLIDPTEPSNSEYSHSKDSRPMAHPDEDPRNTQTSQI</sequence>
<feature type="chain" id="PRO_0000050725" description="BRISC complex subunit Abraxas 2">
    <location>
        <begin position="1"/>
        <end position="415"/>
    </location>
</feature>
<feature type="domain" description="MPN" evidence="3">
    <location>
        <begin position="3"/>
        <end position="149"/>
    </location>
</feature>
<feature type="region of interest" description="Important for interaction with SHMT2" evidence="13">
    <location>
        <begin position="215"/>
        <end position="222"/>
    </location>
</feature>
<feature type="region of interest" description="Important for interaction with BBRC36 and other subunits of the BRISC complex" evidence="16">
    <location>
        <begin position="220"/>
        <end position="241"/>
    </location>
</feature>
<feature type="region of interest" description="Disordered" evidence="4">
    <location>
        <begin position="250"/>
        <end position="323"/>
    </location>
</feature>
<feature type="region of interest" description="Disordered" evidence="4">
    <location>
        <begin position="335"/>
        <end position="415"/>
    </location>
</feature>
<feature type="coiled-coil region" evidence="2">
    <location>
        <begin position="215"/>
        <end position="266"/>
    </location>
</feature>
<feature type="compositionally biased region" description="Basic and acidic residues" evidence="4">
    <location>
        <begin position="251"/>
        <end position="261"/>
    </location>
</feature>
<feature type="compositionally biased region" description="Polar residues" evidence="4">
    <location>
        <begin position="312"/>
        <end position="322"/>
    </location>
</feature>
<feature type="compositionally biased region" description="Polar residues" evidence="4">
    <location>
        <begin position="337"/>
        <end position="347"/>
    </location>
</feature>
<feature type="compositionally biased region" description="Acidic residues" evidence="4">
    <location>
        <begin position="368"/>
        <end position="379"/>
    </location>
</feature>
<feature type="compositionally biased region" description="Basic and acidic residues" evidence="4">
    <location>
        <begin position="392"/>
        <end position="408"/>
    </location>
</feature>
<feature type="modified residue" description="Phosphoserine" evidence="27">
    <location>
        <position position="274"/>
    </location>
</feature>
<feature type="modified residue" description="Phosphoserine" evidence="23 25 27">
    <location>
        <position position="280"/>
    </location>
</feature>
<feature type="modified residue" description="Phosphoserine" evidence="22 23 24 26">
    <location>
        <position position="368"/>
    </location>
</feature>
<feature type="modified residue" description="Phosphoserine" evidence="22 23 24">
    <location>
        <position position="372"/>
    </location>
</feature>
<feature type="modified residue" description="Phosphoserine" evidence="23 24">
    <location>
        <position position="375"/>
    </location>
</feature>
<feature type="mutagenesis site" description="Slightly reduces interaction with BBRC36. Abolishes interaction with SHMT2. Strongly reduces interactions with BABAM2 and BABAM1." evidence="16">
    <original>SA</original>
    <variation>RR</variation>
    <location>
        <begin position="11"/>
        <end position="12"/>
    </location>
</feature>
<feature type="mutagenesis site" description="Reduces interaction with SHMT2, but has no effect on interaction with BRCC3." evidence="13">
    <location>
        <begin position="215"/>
        <end position="222"/>
    </location>
</feature>
<feature type="mutagenesis site" description="Strongly reduces interaction with BBRC3; SHMT2; BABAM2 and BABAM1; when associated with Y-231. Abolishes interaction with BRCC3 and strongly reduces interaction with SHMT2; BABAM2 and BABAM1; when associated with Y-231 and Y-241." evidence="16">
    <original>V</original>
    <variation>R</variation>
    <location>
        <position position="220"/>
    </location>
</feature>
<feature type="mutagenesis site" description="Strongly reduces interaction with BBRC3; SHMT2; BABAM2 and BABAM1; when associated with R-220. Abolishes interaction with BRCC3 and strongly reduces interaction with SHMT2; BABAM2 and BABAM1; when associated with R-220 and Y-241." evidence="16">
    <original>E</original>
    <variation>Y</variation>
    <location>
        <position position="231"/>
    </location>
</feature>
<feature type="mutagenesis site" description="Abolishes interaction with BRCC3 and strongly reduces interaction with SHMT2; BABAM2 and BABAM1; when associated with R-220 and Y-231." evidence="16">
    <original>V</original>
    <variation>R</variation>
    <location>
        <position position="241"/>
    </location>
</feature>
<feature type="sequence conflict" description="In Ref. 1; BAA09927." evidence="20" ref="1">
    <original>EIH</original>
    <variation>QIY</variation>
    <location>
        <begin position="55"/>
        <end position="57"/>
    </location>
</feature>
<feature type="sequence conflict" description="In Ref. 2; BAG59274." evidence="20" ref="2">
    <original>S</original>
    <variation>G</variation>
    <location>
        <position position="230"/>
    </location>
</feature>
<proteinExistence type="evidence at protein level"/>